<organism>
    <name type="scientific">Methanococcus maripaludis (strain DSM 14266 / JCM 13030 / NBRC 101832 / S2 / LL)</name>
    <dbReference type="NCBI Taxonomy" id="267377"/>
    <lineage>
        <taxon>Archaea</taxon>
        <taxon>Methanobacteriati</taxon>
        <taxon>Methanobacteriota</taxon>
        <taxon>Methanomada group</taxon>
        <taxon>Methanococci</taxon>
        <taxon>Methanococcales</taxon>
        <taxon>Methanococcaceae</taxon>
        <taxon>Methanococcus</taxon>
    </lineage>
</organism>
<dbReference type="EC" id="5.4.99.27" evidence="1"/>
<dbReference type="EMBL" id="BX950229">
    <property type="protein sequence ID" value="CAF30171.1"/>
    <property type="status" value="ALT_INIT"/>
    <property type="molecule type" value="Genomic_DNA"/>
</dbReference>
<dbReference type="SMR" id="Q6LZL0"/>
<dbReference type="STRING" id="267377.MMP0615"/>
<dbReference type="EnsemblBacteria" id="CAF30171">
    <property type="protein sequence ID" value="CAF30171"/>
    <property type="gene ID" value="MMP0615"/>
</dbReference>
<dbReference type="KEGG" id="mmp:MMP0615"/>
<dbReference type="PATRIC" id="fig|267377.15.peg.630"/>
<dbReference type="eggNOG" id="arCOG04252">
    <property type="taxonomic scope" value="Archaea"/>
</dbReference>
<dbReference type="HOGENOM" id="CLU_005281_4_1_2"/>
<dbReference type="Proteomes" id="UP000000590">
    <property type="component" value="Chromosome"/>
</dbReference>
<dbReference type="GO" id="GO:0003723">
    <property type="term" value="F:RNA binding"/>
    <property type="evidence" value="ECO:0007669"/>
    <property type="project" value="InterPro"/>
</dbReference>
<dbReference type="GO" id="GO:0160150">
    <property type="term" value="F:tRNA pseudouridine(13) synthase activity"/>
    <property type="evidence" value="ECO:0007669"/>
    <property type="project" value="UniProtKB-EC"/>
</dbReference>
<dbReference type="GO" id="GO:0031119">
    <property type="term" value="P:tRNA pseudouridine synthesis"/>
    <property type="evidence" value="ECO:0007669"/>
    <property type="project" value="UniProtKB-UniRule"/>
</dbReference>
<dbReference type="FunFam" id="3.30.70.3160:FF:000001">
    <property type="entry name" value="Probable tRNA pseudouridine synthase D"/>
    <property type="match status" value="1"/>
</dbReference>
<dbReference type="Gene3D" id="3.30.2350.20">
    <property type="entry name" value="TruD, catalytic domain"/>
    <property type="match status" value="2"/>
</dbReference>
<dbReference type="HAMAP" id="MF_01082">
    <property type="entry name" value="TruD"/>
    <property type="match status" value="1"/>
</dbReference>
<dbReference type="InterPro" id="IPR020103">
    <property type="entry name" value="PsdUridine_synth_cat_dom_sf"/>
</dbReference>
<dbReference type="InterPro" id="IPR001656">
    <property type="entry name" value="PsdUridine_synth_TruD"/>
</dbReference>
<dbReference type="InterPro" id="IPR020119">
    <property type="entry name" value="PsdUridine_synth_TruD_CS"/>
</dbReference>
<dbReference type="InterPro" id="IPR011760">
    <property type="entry name" value="PsdUridine_synth_TruD_insert"/>
</dbReference>
<dbReference type="InterPro" id="IPR042214">
    <property type="entry name" value="TruD_catalytic"/>
</dbReference>
<dbReference type="NCBIfam" id="TIGR00094">
    <property type="entry name" value="tRNA_TruD_broad"/>
    <property type="match status" value="1"/>
</dbReference>
<dbReference type="PANTHER" id="PTHR13326">
    <property type="entry name" value="TRNA PSEUDOURIDINE SYNTHASE D"/>
    <property type="match status" value="1"/>
</dbReference>
<dbReference type="PANTHER" id="PTHR13326:SF24">
    <property type="entry name" value="TRUD DOMAIN-CONTAINING PROTEIN"/>
    <property type="match status" value="1"/>
</dbReference>
<dbReference type="Pfam" id="PF01142">
    <property type="entry name" value="TruD"/>
    <property type="match status" value="2"/>
</dbReference>
<dbReference type="PIRSF" id="PIRSF037016">
    <property type="entry name" value="Pseudouridin_synth_euk_prd"/>
    <property type="match status" value="1"/>
</dbReference>
<dbReference type="SUPFAM" id="SSF55120">
    <property type="entry name" value="Pseudouridine synthase"/>
    <property type="match status" value="1"/>
</dbReference>
<dbReference type="PROSITE" id="PS50984">
    <property type="entry name" value="TRUD"/>
    <property type="match status" value="1"/>
</dbReference>
<dbReference type="PROSITE" id="PS01268">
    <property type="entry name" value="UPF0024"/>
    <property type="match status" value="1"/>
</dbReference>
<proteinExistence type="inferred from homology"/>
<protein>
    <recommendedName>
        <fullName evidence="1">Probable tRNA pseudouridine synthase D 2</fullName>
        <ecNumber evidence="1">5.4.99.27</ecNumber>
    </recommendedName>
    <alternativeName>
        <fullName evidence="1">tRNA pseudouridine(13) synthase</fullName>
    </alternativeName>
    <alternativeName>
        <fullName evidence="1">tRNA pseudouridylate synthase D 2</fullName>
    </alternativeName>
    <alternativeName>
        <fullName evidence="1">tRNA-uridine isomerase D 2</fullName>
    </alternativeName>
</protein>
<feature type="chain" id="PRO_0000152545" description="Probable tRNA pseudouridine synthase D 2">
    <location>
        <begin position="1"/>
        <end position="390"/>
    </location>
</feature>
<feature type="domain" description="TRUD" evidence="1">
    <location>
        <begin position="166"/>
        <end position="353"/>
    </location>
</feature>
<feature type="active site" description="Nucleophile" evidence="1">
    <location>
        <position position="93"/>
    </location>
</feature>
<gene>
    <name evidence="1" type="primary">truD2</name>
    <name type="ordered locus">MMP0615</name>
</gene>
<comment type="function">
    <text evidence="1">Could be responsible for synthesis of pseudouridine from uracil-13 in transfer RNAs.</text>
</comment>
<comment type="catalytic activity">
    <reaction evidence="1">
        <text>uridine(13) in tRNA = pseudouridine(13) in tRNA</text>
        <dbReference type="Rhea" id="RHEA:42540"/>
        <dbReference type="Rhea" id="RHEA-COMP:10105"/>
        <dbReference type="Rhea" id="RHEA-COMP:10106"/>
        <dbReference type="ChEBI" id="CHEBI:65314"/>
        <dbReference type="ChEBI" id="CHEBI:65315"/>
        <dbReference type="EC" id="5.4.99.27"/>
    </reaction>
</comment>
<comment type="similarity">
    <text evidence="1">Belongs to the pseudouridine synthase TruD family.</text>
</comment>
<comment type="sequence caution" evidence="2">
    <conflict type="erroneous initiation">
        <sequence resource="EMBL-CDS" id="CAF30171"/>
    </conflict>
</comment>
<reference key="1">
    <citation type="journal article" date="2004" name="J. Bacteriol.">
        <title>Complete genome sequence of the genetically tractable hydrogenotrophic methanogen Methanococcus maripaludis.</title>
        <authorList>
            <person name="Hendrickson E.L."/>
            <person name="Kaul R."/>
            <person name="Zhou Y."/>
            <person name="Bovee D."/>
            <person name="Chapman P."/>
            <person name="Chung J."/>
            <person name="Conway de Macario E."/>
            <person name="Dodsworth J.A."/>
            <person name="Gillett W."/>
            <person name="Graham D.E."/>
            <person name="Hackett M."/>
            <person name="Haydock A.K."/>
            <person name="Kang A."/>
            <person name="Land M.L."/>
            <person name="Levy R."/>
            <person name="Lie T.J."/>
            <person name="Major T.A."/>
            <person name="Moore B.C."/>
            <person name="Porat I."/>
            <person name="Palmeiri A."/>
            <person name="Rouse G."/>
            <person name="Saenphimmachak C."/>
            <person name="Soell D."/>
            <person name="Van Dien S."/>
            <person name="Wang T."/>
            <person name="Whitman W.B."/>
            <person name="Xia Q."/>
            <person name="Zhang Y."/>
            <person name="Larimer F.W."/>
            <person name="Olson M.V."/>
            <person name="Leigh J.A."/>
        </authorList>
    </citation>
    <scope>NUCLEOTIDE SEQUENCE [LARGE SCALE GENOMIC DNA]</scope>
    <source>
        <strain>DSM 14266 / JCM 13030 / NBRC 101832 / S2 / LL</strain>
    </source>
</reference>
<evidence type="ECO:0000255" key="1">
    <source>
        <dbReference type="HAMAP-Rule" id="MF_01082"/>
    </source>
</evidence>
<evidence type="ECO:0000305" key="2"/>
<name>TRUD2_METMP</name>
<accession>Q6LZL0</accession>
<keyword id="KW-0413">Isomerase</keyword>
<keyword id="KW-1185">Reference proteome</keyword>
<keyword id="KW-0819">tRNA processing</keyword>
<sequence length="390" mass="45732">MPININKFILDMERFDGTLKKYPEDFIVEEITPEGTVLEVGKEIGFEDVEKWHGSFIHFTVEKTNWNTMDALKQIVRATKTKRKNFGFAGTKDKFAVTTQRFGCFGLKKEQLENINIKDIVIRDVQKTNKKLRMGGLWGNKFTIKIRDLNLSEKEIKRISDLKLDYVLNYYGIQRFGLIRPITHIVGKFIYERDFESAFYTYCGTPINETGDSLEARQLVDMGEFKKALKLFNRGHDYEKRLIQQYLKYKDFKMAFTALPPQLNSMFVNAYQAYLFNEMINKRFDYGFDELEGDILEDNTPTGTLIGYDTKFSGGIQGEIEKEIVERENLDLKKFKIEDFGNFYGTRRKMVTPIYDFKSRFENEIFELSFKLERGNYATIVTREFTGNLS</sequence>